<organism>
    <name type="scientific">Bacillus cereus (strain ATCC 14579 / DSM 31 / CCUG 7414 / JCM 2152 / NBRC 15305 / NCIMB 9373 / NCTC 2599 / NRRL B-3711)</name>
    <dbReference type="NCBI Taxonomy" id="226900"/>
    <lineage>
        <taxon>Bacteria</taxon>
        <taxon>Bacillati</taxon>
        <taxon>Bacillota</taxon>
        <taxon>Bacilli</taxon>
        <taxon>Bacillales</taxon>
        <taxon>Bacillaceae</taxon>
        <taxon>Bacillus</taxon>
        <taxon>Bacillus cereus group</taxon>
    </lineage>
</organism>
<name>Y025_BACCR</name>
<keyword id="KW-0963">Cytoplasm</keyword>
<keyword id="KW-0238">DNA-binding</keyword>
<keyword id="KW-1185">Reference proteome</keyword>
<feature type="chain" id="PRO_0000170363" description="Nucleoid-associated protein BC_0025">
    <location>
        <begin position="1"/>
        <end position="109"/>
    </location>
</feature>
<reference key="1">
    <citation type="journal article" date="2003" name="Nature">
        <title>Genome sequence of Bacillus cereus and comparative analysis with Bacillus anthracis.</title>
        <authorList>
            <person name="Ivanova N."/>
            <person name="Sorokin A."/>
            <person name="Anderson I."/>
            <person name="Galleron N."/>
            <person name="Candelon B."/>
            <person name="Kapatral V."/>
            <person name="Bhattacharyya A."/>
            <person name="Reznik G."/>
            <person name="Mikhailova N."/>
            <person name="Lapidus A."/>
            <person name="Chu L."/>
            <person name="Mazur M."/>
            <person name="Goltsman E."/>
            <person name="Larsen N."/>
            <person name="D'Souza M."/>
            <person name="Walunas T."/>
            <person name="Grechkin Y."/>
            <person name="Pusch G."/>
            <person name="Haselkorn R."/>
            <person name="Fonstein M."/>
            <person name="Ehrlich S.D."/>
            <person name="Overbeek R."/>
            <person name="Kyrpides N.C."/>
        </authorList>
    </citation>
    <scope>NUCLEOTIDE SEQUENCE [LARGE SCALE GENOMIC DNA]</scope>
    <source>
        <strain>ATCC 14579 / DSM 31 / CCUG 7414 / JCM 2152 / NBRC 15305 / NCIMB 9373 / NCTC 2599 / NRRL B-3711</strain>
    </source>
</reference>
<evidence type="ECO:0000255" key="1">
    <source>
        <dbReference type="HAMAP-Rule" id="MF_00274"/>
    </source>
</evidence>
<dbReference type="EMBL" id="AE016877">
    <property type="protein sequence ID" value="AAP07128.1"/>
    <property type="molecule type" value="Genomic_DNA"/>
</dbReference>
<dbReference type="RefSeq" id="NP_829927.1">
    <property type="nucleotide sequence ID" value="NC_004722.1"/>
</dbReference>
<dbReference type="SMR" id="Q814C9"/>
<dbReference type="STRING" id="226900.BC_0025"/>
<dbReference type="MetOSite" id="Q814C9"/>
<dbReference type="KEGG" id="bce:BC0025"/>
<dbReference type="PATRIC" id="fig|226900.8.peg.45"/>
<dbReference type="HOGENOM" id="CLU_140930_1_0_9"/>
<dbReference type="OrthoDB" id="9795263at2"/>
<dbReference type="Proteomes" id="UP000001417">
    <property type="component" value="Chromosome"/>
</dbReference>
<dbReference type="GO" id="GO:0043590">
    <property type="term" value="C:bacterial nucleoid"/>
    <property type="evidence" value="ECO:0007669"/>
    <property type="project" value="UniProtKB-UniRule"/>
</dbReference>
<dbReference type="GO" id="GO:0005829">
    <property type="term" value="C:cytosol"/>
    <property type="evidence" value="ECO:0000318"/>
    <property type="project" value="GO_Central"/>
</dbReference>
<dbReference type="GO" id="GO:0003677">
    <property type="term" value="F:DNA binding"/>
    <property type="evidence" value="ECO:0000318"/>
    <property type="project" value="GO_Central"/>
</dbReference>
<dbReference type="FunFam" id="3.30.1310.10:FF:000002">
    <property type="entry name" value="Nucleoid-associated protein IKC_06587"/>
    <property type="match status" value="1"/>
</dbReference>
<dbReference type="Gene3D" id="3.30.1310.10">
    <property type="entry name" value="Nucleoid-associated protein YbaB-like domain"/>
    <property type="match status" value="1"/>
</dbReference>
<dbReference type="HAMAP" id="MF_00274">
    <property type="entry name" value="DNA_YbaB_EbfC"/>
    <property type="match status" value="1"/>
</dbReference>
<dbReference type="InterPro" id="IPR036894">
    <property type="entry name" value="YbaB-like_sf"/>
</dbReference>
<dbReference type="InterPro" id="IPR004401">
    <property type="entry name" value="YbaB/EbfC"/>
</dbReference>
<dbReference type="NCBIfam" id="TIGR00103">
    <property type="entry name" value="DNA_YbaB_EbfC"/>
    <property type="match status" value="1"/>
</dbReference>
<dbReference type="PANTHER" id="PTHR33449">
    <property type="entry name" value="NUCLEOID-ASSOCIATED PROTEIN YBAB"/>
    <property type="match status" value="1"/>
</dbReference>
<dbReference type="PANTHER" id="PTHR33449:SF1">
    <property type="entry name" value="NUCLEOID-ASSOCIATED PROTEIN YBAB"/>
    <property type="match status" value="1"/>
</dbReference>
<dbReference type="Pfam" id="PF02575">
    <property type="entry name" value="YbaB_DNA_bd"/>
    <property type="match status" value="1"/>
</dbReference>
<dbReference type="PIRSF" id="PIRSF004555">
    <property type="entry name" value="UCP004555"/>
    <property type="match status" value="1"/>
</dbReference>
<dbReference type="SUPFAM" id="SSF82607">
    <property type="entry name" value="YbaB-like"/>
    <property type="match status" value="1"/>
</dbReference>
<protein>
    <recommendedName>
        <fullName evidence="1">Nucleoid-associated protein BC_0025</fullName>
    </recommendedName>
</protein>
<sequence>MMRGGMGNMNNMMKQMQKMQKDMAKAQEELGEKTVEGTAGGGMITVIANGHKQILEVKIKEEVVDPEDIEMLQDLVLAATNDALKKADELSNSTMGKFTKGLNLPGGMF</sequence>
<proteinExistence type="inferred from homology"/>
<accession>Q814C9</accession>
<gene>
    <name type="ordered locus">BC_0025</name>
</gene>
<comment type="function">
    <text evidence="1">Binds to DNA and alters its conformation. May be involved in regulation of gene expression, nucleoid organization and DNA protection.</text>
</comment>
<comment type="subunit">
    <text evidence="1">Homodimer.</text>
</comment>
<comment type="subcellular location">
    <subcellularLocation>
        <location evidence="1">Cytoplasm</location>
        <location evidence="1">Nucleoid</location>
    </subcellularLocation>
</comment>
<comment type="similarity">
    <text evidence="1">Belongs to the YbaB/EbfC family.</text>
</comment>